<accession>Q1IZA1</accession>
<comment type="catalytic activity">
    <reaction evidence="1">
        <text>tRNA(Asn) + L-asparagine + ATP = L-asparaginyl-tRNA(Asn) + AMP + diphosphate + H(+)</text>
        <dbReference type="Rhea" id="RHEA:11180"/>
        <dbReference type="Rhea" id="RHEA-COMP:9659"/>
        <dbReference type="Rhea" id="RHEA-COMP:9674"/>
        <dbReference type="ChEBI" id="CHEBI:15378"/>
        <dbReference type="ChEBI" id="CHEBI:30616"/>
        <dbReference type="ChEBI" id="CHEBI:33019"/>
        <dbReference type="ChEBI" id="CHEBI:58048"/>
        <dbReference type="ChEBI" id="CHEBI:78442"/>
        <dbReference type="ChEBI" id="CHEBI:78515"/>
        <dbReference type="ChEBI" id="CHEBI:456215"/>
        <dbReference type="EC" id="6.1.1.22"/>
    </reaction>
</comment>
<comment type="subunit">
    <text evidence="1">Homodimer.</text>
</comment>
<comment type="subcellular location">
    <subcellularLocation>
        <location evidence="1">Cytoplasm</location>
    </subcellularLocation>
</comment>
<comment type="similarity">
    <text evidence="1">Belongs to the class-II aminoacyl-tRNA synthetase family.</text>
</comment>
<name>SYN_DEIGD</name>
<evidence type="ECO:0000255" key="1">
    <source>
        <dbReference type="HAMAP-Rule" id="MF_00534"/>
    </source>
</evidence>
<keyword id="KW-0030">Aminoacyl-tRNA synthetase</keyword>
<keyword id="KW-0067">ATP-binding</keyword>
<keyword id="KW-0963">Cytoplasm</keyword>
<keyword id="KW-0436">Ligase</keyword>
<keyword id="KW-0547">Nucleotide-binding</keyword>
<keyword id="KW-0648">Protein biosynthesis</keyword>
<sequence length="449" mass="50633">MTVIPNVSIDALKNHVGETVRVNAWLTDKSGKGKLQFLKLRDGSGFVQATVFKGDVPEEVFEAARRLSQEQAVRVTGEVRADERAPGGVELAVRDLVPFAANQAEYPITPKEHGIEFLLDHRHLWLRHRRPWAILRVRDCVERAIVEFFHQEGFIRFDAPFFTPNAAEGTTELFEIDLFGEDKAYLSQTGQLHAEAGALAFGKVYTFGPTFRAEKSKTRRHLLEFWMVEPEVAPATHQDNMDLQERLVSFLVRRVLEECAAELAVLGRDVAKLQPAAEGNYPRVTYTEALDIIRRHIAEGDLPPNVQPDVQPVEWGDDLGAPHETILGFHFDRPVIVERYPAAIKAFYMQPDPADPRLALCDDMIAPEGYGEIIGGSERIHDYTLLKARIEGEGLPLSAFDWYLDLRRFGSVPHAGFGMGLERVIAWITGIDHIREAIPFPRMLTRMVP</sequence>
<feature type="chain" id="PRO_1000081847" description="Asparagine--tRNA ligase">
    <location>
        <begin position="1"/>
        <end position="449"/>
    </location>
</feature>
<proteinExistence type="inferred from homology"/>
<dbReference type="EC" id="6.1.1.22" evidence="1"/>
<dbReference type="EMBL" id="CP000359">
    <property type="protein sequence ID" value="ABF45433.1"/>
    <property type="molecule type" value="Genomic_DNA"/>
</dbReference>
<dbReference type="RefSeq" id="WP_011530270.1">
    <property type="nucleotide sequence ID" value="NC_008025.1"/>
</dbReference>
<dbReference type="SMR" id="Q1IZA1"/>
<dbReference type="STRING" id="319795.Dgeo_1136"/>
<dbReference type="KEGG" id="dge:Dgeo_1136"/>
<dbReference type="eggNOG" id="COG0017">
    <property type="taxonomic scope" value="Bacteria"/>
</dbReference>
<dbReference type="HOGENOM" id="CLU_004553_2_0_0"/>
<dbReference type="Proteomes" id="UP000002431">
    <property type="component" value="Chromosome"/>
</dbReference>
<dbReference type="GO" id="GO:0005737">
    <property type="term" value="C:cytoplasm"/>
    <property type="evidence" value="ECO:0007669"/>
    <property type="project" value="UniProtKB-SubCell"/>
</dbReference>
<dbReference type="GO" id="GO:0004816">
    <property type="term" value="F:asparagine-tRNA ligase activity"/>
    <property type="evidence" value="ECO:0007669"/>
    <property type="project" value="UniProtKB-UniRule"/>
</dbReference>
<dbReference type="GO" id="GO:0005524">
    <property type="term" value="F:ATP binding"/>
    <property type="evidence" value="ECO:0007669"/>
    <property type="project" value="UniProtKB-UniRule"/>
</dbReference>
<dbReference type="GO" id="GO:0003676">
    <property type="term" value="F:nucleic acid binding"/>
    <property type="evidence" value="ECO:0007669"/>
    <property type="project" value="InterPro"/>
</dbReference>
<dbReference type="GO" id="GO:0006421">
    <property type="term" value="P:asparaginyl-tRNA aminoacylation"/>
    <property type="evidence" value="ECO:0007669"/>
    <property type="project" value="UniProtKB-UniRule"/>
</dbReference>
<dbReference type="CDD" id="cd04323">
    <property type="entry name" value="AsnRS_cyto_like_N"/>
    <property type="match status" value="1"/>
</dbReference>
<dbReference type="CDD" id="cd00776">
    <property type="entry name" value="AsxRS_core"/>
    <property type="match status" value="1"/>
</dbReference>
<dbReference type="Gene3D" id="3.30.930.10">
    <property type="entry name" value="Bira Bifunctional Protein, Domain 2"/>
    <property type="match status" value="1"/>
</dbReference>
<dbReference type="Gene3D" id="2.40.50.140">
    <property type="entry name" value="Nucleic acid-binding proteins"/>
    <property type="match status" value="1"/>
</dbReference>
<dbReference type="HAMAP" id="MF_00534">
    <property type="entry name" value="Asn_tRNA_synth"/>
    <property type="match status" value="1"/>
</dbReference>
<dbReference type="InterPro" id="IPR004364">
    <property type="entry name" value="Aa-tRNA-synt_II"/>
</dbReference>
<dbReference type="InterPro" id="IPR006195">
    <property type="entry name" value="aa-tRNA-synth_II"/>
</dbReference>
<dbReference type="InterPro" id="IPR045864">
    <property type="entry name" value="aa-tRNA-synth_II/BPL/LPL"/>
</dbReference>
<dbReference type="InterPro" id="IPR004522">
    <property type="entry name" value="Asn-tRNA-ligase"/>
</dbReference>
<dbReference type="InterPro" id="IPR002312">
    <property type="entry name" value="Asp/Asn-tRNA-synth_IIb"/>
</dbReference>
<dbReference type="InterPro" id="IPR012340">
    <property type="entry name" value="NA-bd_OB-fold"/>
</dbReference>
<dbReference type="InterPro" id="IPR004365">
    <property type="entry name" value="NA-bd_OB_tRNA"/>
</dbReference>
<dbReference type="NCBIfam" id="TIGR00457">
    <property type="entry name" value="asnS"/>
    <property type="match status" value="1"/>
</dbReference>
<dbReference type="NCBIfam" id="NF003037">
    <property type="entry name" value="PRK03932.1"/>
    <property type="match status" value="1"/>
</dbReference>
<dbReference type="PANTHER" id="PTHR22594:SF34">
    <property type="entry name" value="ASPARAGINE--TRNA LIGASE, MITOCHONDRIAL-RELATED"/>
    <property type="match status" value="1"/>
</dbReference>
<dbReference type="PANTHER" id="PTHR22594">
    <property type="entry name" value="ASPARTYL/LYSYL-TRNA SYNTHETASE"/>
    <property type="match status" value="1"/>
</dbReference>
<dbReference type="Pfam" id="PF00152">
    <property type="entry name" value="tRNA-synt_2"/>
    <property type="match status" value="1"/>
</dbReference>
<dbReference type="Pfam" id="PF01336">
    <property type="entry name" value="tRNA_anti-codon"/>
    <property type="match status" value="1"/>
</dbReference>
<dbReference type="PRINTS" id="PR01042">
    <property type="entry name" value="TRNASYNTHASP"/>
</dbReference>
<dbReference type="SUPFAM" id="SSF55681">
    <property type="entry name" value="Class II aaRS and biotin synthetases"/>
    <property type="match status" value="1"/>
</dbReference>
<dbReference type="SUPFAM" id="SSF50249">
    <property type="entry name" value="Nucleic acid-binding proteins"/>
    <property type="match status" value="1"/>
</dbReference>
<dbReference type="PROSITE" id="PS50862">
    <property type="entry name" value="AA_TRNA_LIGASE_II"/>
    <property type="match status" value="1"/>
</dbReference>
<protein>
    <recommendedName>
        <fullName evidence="1">Asparagine--tRNA ligase</fullName>
        <ecNumber evidence="1">6.1.1.22</ecNumber>
    </recommendedName>
    <alternativeName>
        <fullName evidence="1">Asparaginyl-tRNA synthetase</fullName>
        <shortName evidence="1">AsnRS</shortName>
    </alternativeName>
</protein>
<organism>
    <name type="scientific">Deinococcus geothermalis (strain DSM 11300 / CIP 105573 / AG-3a)</name>
    <dbReference type="NCBI Taxonomy" id="319795"/>
    <lineage>
        <taxon>Bacteria</taxon>
        <taxon>Thermotogati</taxon>
        <taxon>Deinococcota</taxon>
        <taxon>Deinococci</taxon>
        <taxon>Deinococcales</taxon>
        <taxon>Deinococcaceae</taxon>
        <taxon>Deinococcus</taxon>
    </lineage>
</organism>
<reference key="1">
    <citation type="submission" date="2006-04" db="EMBL/GenBank/DDBJ databases">
        <title>Complete sequence of chromosome of Deinococcus geothermalis DSM 11300.</title>
        <authorList>
            <person name="Copeland A."/>
            <person name="Lucas S."/>
            <person name="Lapidus A."/>
            <person name="Barry K."/>
            <person name="Detter J.C."/>
            <person name="Glavina del Rio T."/>
            <person name="Hammon N."/>
            <person name="Israni S."/>
            <person name="Dalin E."/>
            <person name="Tice H."/>
            <person name="Pitluck S."/>
            <person name="Brettin T."/>
            <person name="Bruce D."/>
            <person name="Han C."/>
            <person name="Tapia R."/>
            <person name="Saunders E."/>
            <person name="Gilna P."/>
            <person name="Schmutz J."/>
            <person name="Larimer F."/>
            <person name="Land M."/>
            <person name="Hauser L."/>
            <person name="Kyrpides N."/>
            <person name="Kim E."/>
            <person name="Daly M.J."/>
            <person name="Fredrickson J.K."/>
            <person name="Makarova K.S."/>
            <person name="Gaidamakova E.K."/>
            <person name="Zhai M."/>
            <person name="Richardson P."/>
        </authorList>
    </citation>
    <scope>NUCLEOTIDE SEQUENCE [LARGE SCALE GENOMIC DNA]</scope>
    <source>
        <strain>DSM 11300 / CIP 105573 / AG-3a</strain>
    </source>
</reference>
<gene>
    <name evidence="1" type="primary">asnS</name>
    <name type="ordered locus">Dgeo_1136</name>
</gene>